<proteinExistence type="evidence at transcript level"/>
<feature type="chain" id="PRO_0000313658" description="Mitoguardin 2">
    <location>
        <begin position="1"/>
        <end position="593"/>
    </location>
</feature>
<feature type="transmembrane region" description="Helical" evidence="3">
    <location>
        <begin position="11"/>
        <end position="31"/>
    </location>
</feature>
<feature type="transmembrane region" description="Helical" evidence="3">
    <location>
        <begin position="42"/>
        <end position="62"/>
    </location>
</feature>
<feature type="transmembrane region" description="Helical" evidence="3">
    <location>
        <begin position="563"/>
        <end position="583"/>
    </location>
</feature>
<feature type="region of interest" description="Disordered" evidence="4">
    <location>
        <begin position="101"/>
        <end position="134"/>
    </location>
</feature>
<feature type="region of interest" description="Disordered" evidence="4">
    <location>
        <begin position="195"/>
        <end position="228"/>
    </location>
</feature>
<feature type="short sequence motif" description="FFAT" evidence="1">
    <location>
        <begin position="292"/>
        <end position="298"/>
    </location>
</feature>
<feature type="compositionally biased region" description="Polar residues" evidence="4">
    <location>
        <begin position="107"/>
        <end position="123"/>
    </location>
</feature>
<feature type="compositionally biased region" description="Low complexity" evidence="4">
    <location>
        <begin position="124"/>
        <end position="134"/>
    </location>
</feature>
<feature type="modified residue" description="Phosphoserine" evidence="2">
    <location>
        <position position="132"/>
    </location>
</feature>
<feature type="modified residue" description="Phosphothreonine" evidence="2">
    <location>
        <position position="206"/>
    </location>
</feature>
<feature type="modified residue" description="Phosphoserine" evidence="2">
    <location>
        <position position="220"/>
    </location>
</feature>
<feature type="modified residue" description="Phosphoserine" evidence="1">
    <location>
        <position position="224"/>
    </location>
</feature>
<feature type="modified residue" description="Phosphoserine" evidence="2">
    <location>
        <position position="228"/>
    </location>
</feature>
<feature type="modified residue" description="Phosphothreonine" evidence="1">
    <location>
        <position position="273"/>
    </location>
</feature>
<feature type="modified residue" description="Phosphoserine" evidence="1">
    <location>
        <position position="276"/>
    </location>
</feature>
<feature type="modified residue" description="Phosphoserine" evidence="1">
    <location>
        <position position="295"/>
    </location>
</feature>
<gene>
    <name evidence="1" type="primary">MIGA2</name>
    <name evidence="1" type="synonym">FAM73B</name>
</gene>
<dbReference type="EMBL" id="BT025393">
    <property type="protein sequence ID" value="ABF57349.1"/>
    <property type="molecule type" value="mRNA"/>
</dbReference>
<dbReference type="RefSeq" id="NP_001069521.1">
    <property type="nucleotide sequence ID" value="NM_001076053.1"/>
</dbReference>
<dbReference type="RefSeq" id="XP_005213362.1">
    <property type="nucleotide sequence ID" value="XM_005213305.5"/>
</dbReference>
<dbReference type="RefSeq" id="XP_059747323.1">
    <property type="nucleotide sequence ID" value="XM_059891340.1"/>
</dbReference>
<dbReference type="RefSeq" id="XP_059747324.1">
    <property type="nucleotide sequence ID" value="XM_059891341.1"/>
</dbReference>
<dbReference type="SMR" id="Q1JPG0"/>
<dbReference type="FunCoup" id="Q1JPG0">
    <property type="interactions" value="1507"/>
</dbReference>
<dbReference type="STRING" id="9913.ENSBTAP00000014090"/>
<dbReference type="PaxDb" id="9913-ENSBTAP00000014090"/>
<dbReference type="Ensembl" id="ENSBTAT00000014090.5">
    <property type="protein sequence ID" value="ENSBTAP00000014090.3"/>
    <property type="gene ID" value="ENSBTAG00000010653.7"/>
</dbReference>
<dbReference type="GeneID" id="535315"/>
<dbReference type="KEGG" id="bta:535315"/>
<dbReference type="CTD" id="84895"/>
<dbReference type="VEuPathDB" id="HostDB:ENSBTAG00000010653"/>
<dbReference type="VGNC" id="VGNC:31474">
    <property type="gene designation" value="MIGA2"/>
</dbReference>
<dbReference type="eggNOG" id="KOG3831">
    <property type="taxonomic scope" value="Eukaryota"/>
</dbReference>
<dbReference type="GeneTree" id="ENSGT00390000008565"/>
<dbReference type="HOGENOM" id="CLU_031519_2_1_1"/>
<dbReference type="InParanoid" id="Q1JPG0"/>
<dbReference type="OMA" id="AHFYVIS"/>
<dbReference type="OrthoDB" id="8880065at2759"/>
<dbReference type="TreeFam" id="TF313896"/>
<dbReference type="Reactome" id="R-BTA-1483166">
    <property type="pathway name" value="Synthesis of PA"/>
</dbReference>
<dbReference type="Proteomes" id="UP000009136">
    <property type="component" value="Chromosome 11"/>
</dbReference>
<dbReference type="Bgee" id="ENSBTAG00000010653">
    <property type="expression patterns" value="Expressed in retina and 105 other cell types or tissues"/>
</dbReference>
<dbReference type="GO" id="GO:0005741">
    <property type="term" value="C:mitochondrial outer membrane"/>
    <property type="evidence" value="ECO:0007669"/>
    <property type="project" value="UniProtKB-SubCell"/>
</dbReference>
<dbReference type="GO" id="GO:0005886">
    <property type="term" value="C:plasma membrane"/>
    <property type="evidence" value="ECO:0000250"/>
    <property type="project" value="UniProtKB"/>
</dbReference>
<dbReference type="GO" id="GO:0046982">
    <property type="term" value="F:protein heterodimerization activity"/>
    <property type="evidence" value="ECO:0000250"/>
    <property type="project" value="UniProtKB"/>
</dbReference>
<dbReference type="GO" id="GO:0042803">
    <property type="term" value="F:protein homodimerization activity"/>
    <property type="evidence" value="ECO:0000250"/>
    <property type="project" value="UniProtKB"/>
</dbReference>
<dbReference type="GO" id="GO:0060348">
    <property type="term" value="P:bone development"/>
    <property type="evidence" value="ECO:0007669"/>
    <property type="project" value="Ensembl"/>
</dbReference>
<dbReference type="GO" id="GO:0008053">
    <property type="term" value="P:mitochondrial fusion"/>
    <property type="evidence" value="ECO:0000250"/>
    <property type="project" value="UniProtKB"/>
</dbReference>
<dbReference type="InterPro" id="IPR019392">
    <property type="entry name" value="Miga"/>
</dbReference>
<dbReference type="PANTHER" id="PTHR21508">
    <property type="entry name" value="MITOGUARDIN"/>
    <property type="match status" value="1"/>
</dbReference>
<dbReference type="PANTHER" id="PTHR21508:SF4">
    <property type="entry name" value="MITOGUARDIN 2"/>
    <property type="match status" value="1"/>
</dbReference>
<dbReference type="Pfam" id="PF10265">
    <property type="entry name" value="Miga"/>
    <property type="match status" value="1"/>
</dbReference>
<organism>
    <name type="scientific">Bos taurus</name>
    <name type="common">Bovine</name>
    <dbReference type="NCBI Taxonomy" id="9913"/>
    <lineage>
        <taxon>Eukaryota</taxon>
        <taxon>Metazoa</taxon>
        <taxon>Chordata</taxon>
        <taxon>Craniata</taxon>
        <taxon>Vertebrata</taxon>
        <taxon>Euteleostomi</taxon>
        <taxon>Mammalia</taxon>
        <taxon>Eutheria</taxon>
        <taxon>Laurasiatheria</taxon>
        <taxon>Artiodactyla</taxon>
        <taxon>Ruminantia</taxon>
        <taxon>Pecora</taxon>
        <taxon>Bovidae</taxon>
        <taxon>Bovinae</taxon>
        <taxon>Bos</taxon>
    </lineage>
</organism>
<reference key="1">
    <citation type="journal article" date="2005" name="BMC Genomics">
        <title>Characterization of 954 bovine full-CDS cDNA sequences.</title>
        <authorList>
            <person name="Harhay G.P."/>
            <person name="Sonstegard T.S."/>
            <person name="Keele J.W."/>
            <person name="Heaton M.P."/>
            <person name="Clawson M.L."/>
            <person name="Snelling W.M."/>
            <person name="Wiedmann R.T."/>
            <person name="Van Tassell C.P."/>
            <person name="Smith T.P.L."/>
        </authorList>
    </citation>
    <scope>NUCLEOTIDE SEQUENCE [LARGE SCALE MRNA]</scope>
</reference>
<accession>Q1JPG0</accession>
<evidence type="ECO:0000250" key="1">
    <source>
        <dbReference type="UniProtKB" id="Q7L4E1"/>
    </source>
</evidence>
<evidence type="ECO:0000250" key="2">
    <source>
        <dbReference type="UniProtKB" id="Q8BK03"/>
    </source>
</evidence>
<evidence type="ECO:0000255" key="3"/>
<evidence type="ECO:0000256" key="4">
    <source>
        <dbReference type="SAM" id="MobiDB-lite"/>
    </source>
</evidence>
<evidence type="ECO:0000305" key="5"/>
<comment type="function">
    <text evidence="1">Regulator of mitochondrial fusion: acts by forming homo- and heterodimers at the mitochondrial outer membrane and facilitating the formation of PLD6/MitoPLD dimers. May act by regulating phospholipid metabolism via PLD6/MitoPLD.</text>
</comment>
<comment type="subunit">
    <text evidence="1">Homodimer and heterodimer; forms heterodimers with MIGA1. Interacts with PLD6/MitoPLD. Interacts (via phosphorylated FFAT motif) with MOSPD2.</text>
</comment>
<comment type="subcellular location">
    <subcellularLocation>
        <location evidence="1">Mitochondrion outer membrane</location>
        <topology evidence="3">Multi-pass membrane protein</topology>
    </subcellularLocation>
</comment>
<comment type="domain">
    <text evidence="1">The FFAT motif is involved in the interaction with MOSPD2 and its phosphorylation regulates this interaction.</text>
</comment>
<comment type="PTM">
    <text evidence="1">Phosphorylation at Ser-295 of the FFAT motif activates interaction with MOSPD2.</text>
</comment>
<comment type="similarity">
    <text evidence="5">Belongs to the mitoguardin family.</text>
</comment>
<protein>
    <recommendedName>
        <fullName evidence="1">Mitoguardin 2</fullName>
    </recommendedName>
    <alternativeName>
        <fullName evidence="5">Protein FAM73B</fullName>
    </alternativeName>
</protein>
<sequence length="593" mass="65433">MAFRRTEGMSMIQALAMTVAEIPVFLYTTFGQSAFSQLRLTPGLRKVLFATALGTVALALAAHQLKRRRRKKKQVGPEMGGEHLGTVPLPILMARKVPSVKKGYSNRRVQSPSSKSNDTLSGISSIEPSKHSGSSHSLASMVVVNSSSPTAACSGPWETRGIEESVTTADGNAESLYMQGMELFEEALQKWEQALSVGQRGDSGSTPTPGDGLRNPETASEALSEPESQRKEFAEKLESLLHRAYHLQEEFGSTFPADSMLLDLERTLMLPLTEGSLRLRADDGDSLTSEDSFFSATELFESLQVGDYPIPLSRPAAAYEEALQLVKEGKVPCRTLRTELLGCYSDQDFLAKLHCVRQAFEGLLEDKSHQLFFGEVGRQMVTGLMTKAEKSPKGFLESYEEMLSYALRPETWATTRLELEGRGVVCMSFFDIVLDFILMDAFEDLENPPSSVLAVLRNRWLSDSFKETALATACWSVLKAKRRLLMVPDGFISHFYSVSEHVSPVLAFGFLGPKPQLSEVCAFFKHQIVQYLTDMFDLDNVRYTSVPALAEDILQLSRRRSEILLGYLGVPAASSIGLNGVLPRENGPPEALQ</sequence>
<keyword id="KW-0472">Membrane</keyword>
<keyword id="KW-0496">Mitochondrion</keyword>
<keyword id="KW-1000">Mitochondrion outer membrane</keyword>
<keyword id="KW-0597">Phosphoprotein</keyword>
<keyword id="KW-1185">Reference proteome</keyword>
<keyword id="KW-0812">Transmembrane</keyword>
<keyword id="KW-1133">Transmembrane helix</keyword>
<name>MIGA2_BOVIN</name>